<keyword id="KW-0963">Cytoplasm</keyword>
<keyword id="KW-0238">DNA-binding</keyword>
<keyword id="KW-0804">Transcription</keyword>
<keyword id="KW-0805">Transcription regulation</keyword>
<name>Y1817_CLAM3</name>
<gene>
    <name type="ordered locus">CMM_1817</name>
</gene>
<protein>
    <recommendedName>
        <fullName evidence="1">Probable transcriptional regulatory protein CMM_1817</fullName>
    </recommendedName>
</protein>
<feature type="chain" id="PRO_1000045297" description="Probable transcriptional regulatory protein CMM_1817">
    <location>
        <begin position="1"/>
        <end position="255"/>
    </location>
</feature>
<organism>
    <name type="scientific">Clavibacter michiganensis subsp. michiganensis (strain NCPPB 382)</name>
    <dbReference type="NCBI Taxonomy" id="443906"/>
    <lineage>
        <taxon>Bacteria</taxon>
        <taxon>Bacillati</taxon>
        <taxon>Actinomycetota</taxon>
        <taxon>Actinomycetes</taxon>
        <taxon>Micrococcales</taxon>
        <taxon>Microbacteriaceae</taxon>
        <taxon>Clavibacter</taxon>
    </lineage>
</organism>
<comment type="subcellular location">
    <subcellularLocation>
        <location evidence="1">Cytoplasm</location>
    </subcellularLocation>
</comment>
<comment type="similarity">
    <text evidence="1">Belongs to the TACO1 family.</text>
</comment>
<sequence length="255" mass="27449">MSGHSKWATTKHKKAIIDSRRAKSFAKLIKNIEVAAKIGGADMSGNPTLVDAVQKAKKTSVPNDNIDRAVKRGAGLLGEVVDYQTIMYEGYAASGVAMLVECLTDNKNRAAAEVRTAMSRNGGTMADPGSVAYNFHRKGVIAVPHDEAPTEDDVLAAVLDAGAEDVTDHGEVFEIRCEPSDMVAVRQALQEAGIDYDSADVEFVPQVKVEVDLETARKVNKLVDAMEDLDDVQNIYVNSDVPADVQAALDDDDEE</sequence>
<accession>A5CS09</accession>
<proteinExistence type="inferred from homology"/>
<evidence type="ECO:0000255" key="1">
    <source>
        <dbReference type="HAMAP-Rule" id="MF_00693"/>
    </source>
</evidence>
<dbReference type="EMBL" id="AM711867">
    <property type="protein sequence ID" value="CAN01872.1"/>
    <property type="molecule type" value="Genomic_DNA"/>
</dbReference>
<dbReference type="RefSeq" id="WP_012038504.1">
    <property type="nucleotide sequence ID" value="NC_009480.1"/>
</dbReference>
<dbReference type="SMR" id="A5CS09"/>
<dbReference type="KEGG" id="cmi:CMM_1817"/>
<dbReference type="eggNOG" id="COG0217">
    <property type="taxonomic scope" value="Bacteria"/>
</dbReference>
<dbReference type="HOGENOM" id="CLU_062974_2_2_11"/>
<dbReference type="OrthoDB" id="9781053at2"/>
<dbReference type="Proteomes" id="UP000001564">
    <property type="component" value="Chromosome"/>
</dbReference>
<dbReference type="GO" id="GO:0005829">
    <property type="term" value="C:cytosol"/>
    <property type="evidence" value="ECO:0007669"/>
    <property type="project" value="TreeGrafter"/>
</dbReference>
<dbReference type="GO" id="GO:0003677">
    <property type="term" value="F:DNA binding"/>
    <property type="evidence" value="ECO:0007669"/>
    <property type="project" value="UniProtKB-UniRule"/>
</dbReference>
<dbReference type="GO" id="GO:0006355">
    <property type="term" value="P:regulation of DNA-templated transcription"/>
    <property type="evidence" value="ECO:0007669"/>
    <property type="project" value="UniProtKB-UniRule"/>
</dbReference>
<dbReference type="FunFam" id="1.10.10.200:FF:000002">
    <property type="entry name" value="Probable transcriptional regulatory protein CLM62_37755"/>
    <property type="match status" value="1"/>
</dbReference>
<dbReference type="Gene3D" id="1.10.10.200">
    <property type="match status" value="1"/>
</dbReference>
<dbReference type="Gene3D" id="3.30.70.980">
    <property type="match status" value="2"/>
</dbReference>
<dbReference type="HAMAP" id="MF_00693">
    <property type="entry name" value="Transcrip_reg_TACO1"/>
    <property type="match status" value="1"/>
</dbReference>
<dbReference type="InterPro" id="IPR017856">
    <property type="entry name" value="Integrase-like_N"/>
</dbReference>
<dbReference type="InterPro" id="IPR048300">
    <property type="entry name" value="TACO1_YebC-like_2nd/3rd_dom"/>
</dbReference>
<dbReference type="InterPro" id="IPR049083">
    <property type="entry name" value="TACO1_YebC_N"/>
</dbReference>
<dbReference type="InterPro" id="IPR002876">
    <property type="entry name" value="Transcrip_reg_TACO1-like"/>
</dbReference>
<dbReference type="InterPro" id="IPR026564">
    <property type="entry name" value="Transcrip_reg_TACO1-like_dom3"/>
</dbReference>
<dbReference type="InterPro" id="IPR029072">
    <property type="entry name" value="YebC-like"/>
</dbReference>
<dbReference type="NCBIfam" id="NF001030">
    <property type="entry name" value="PRK00110.1"/>
    <property type="match status" value="1"/>
</dbReference>
<dbReference type="NCBIfam" id="NF009044">
    <property type="entry name" value="PRK12378.1"/>
    <property type="match status" value="1"/>
</dbReference>
<dbReference type="NCBIfam" id="TIGR01033">
    <property type="entry name" value="YebC/PmpR family DNA-binding transcriptional regulator"/>
    <property type="match status" value="1"/>
</dbReference>
<dbReference type="PANTHER" id="PTHR12532:SF6">
    <property type="entry name" value="TRANSCRIPTIONAL REGULATORY PROTEIN YEBC-RELATED"/>
    <property type="match status" value="1"/>
</dbReference>
<dbReference type="PANTHER" id="PTHR12532">
    <property type="entry name" value="TRANSLATIONAL ACTIVATOR OF CYTOCHROME C OXIDASE 1"/>
    <property type="match status" value="1"/>
</dbReference>
<dbReference type="Pfam" id="PF20772">
    <property type="entry name" value="TACO1_YebC_N"/>
    <property type="match status" value="1"/>
</dbReference>
<dbReference type="Pfam" id="PF01709">
    <property type="entry name" value="Transcrip_reg"/>
    <property type="match status" value="1"/>
</dbReference>
<dbReference type="SUPFAM" id="SSF75625">
    <property type="entry name" value="YebC-like"/>
    <property type="match status" value="1"/>
</dbReference>
<reference key="1">
    <citation type="journal article" date="2008" name="J. Bacteriol.">
        <title>The genome sequence of the tomato-pathogenic actinomycete Clavibacter michiganensis subsp. michiganensis NCPPB382 reveals a large island involved in pathogenicity.</title>
        <authorList>
            <person name="Gartemann K.-H."/>
            <person name="Abt B."/>
            <person name="Bekel T."/>
            <person name="Burger A."/>
            <person name="Engemann J."/>
            <person name="Fluegel M."/>
            <person name="Gaigalat L."/>
            <person name="Goesmann A."/>
            <person name="Graefen I."/>
            <person name="Kalinowski J."/>
            <person name="Kaup O."/>
            <person name="Kirchner O."/>
            <person name="Krause L."/>
            <person name="Linke B."/>
            <person name="McHardy A."/>
            <person name="Meyer F."/>
            <person name="Pohle S."/>
            <person name="Rueckert C."/>
            <person name="Schneiker S."/>
            <person name="Zellermann E.-M."/>
            <person name="Puehler A."/>
            <person name="Eichenlaub R."/>
            <person name="Kaiser O."/>
            <person name="Bartels D."/>
        </authorList>
    </citation>
    <scope>NUCLEOTIDE SEQUENCE [LARGE SCALE GENOMIC DNA]</scope>
    <source>
        <strain>NCPPB 382</strain>
    </source>
</reference>